<proteinExistence type="evidence at transcript level"/>
<sequence length="316" mass="35908">MPITIGRGFLKSEMFSQSAISQRSFFTLLWEKIKDFFCDTQRSTADQYIKELCDVASPPDAQRLFDLFCKLYELSSPSCRGNFHFQHYKDAECQYTNLCIKDGEDIPLCIMIRQDHYYYEIMNRTVLCVDTQSAHLKRYSDINIKASTYVCEPLCCLFPERLQLSLSGGITFSVDLKNIEETLIAMAEKGNLCDWKEQERKAAISSRINLGIAQAGVTAIDDAIKNKIAAKVIENTNLKNAAFEPNYAQSSVTQIVYSCLFKNEILMNMLEESSSHGLLCLNELTEYVALQVHNSLFSEDLSSLVETTKNEAHHQS</sequence>
<organism>
    <name type="scientific">Salmonella typhimurium (strain LT2 / SGSC1412 / ATCC 700720)</name>
    <dbReference type="NCBI Taxonomy" id="99287"/>
    <lineage>
        <taxon>Bacteria</taxon>
        <taxon>Pseudomonadati</taxon>
        <taxon>Pseudomonadota</taxon>
        <taxon>Gammaproteobacteria</taxon>
        <taxon>Enterobacterales</taxon>
        <taxon>Enterobacteriaceae</taxon>
        <taxon>Salmonella</taxon>
    </lineage>
</organism>
<accession>Q9KIB9</accession>
<accession>Q7CQI0</accession>
<feature type="chain" id="PRO_0000391466" description="Secreted effector protein SifB">
    <location>
        <begin position="1"/>
        <end position="316"/>
    </location>
</feature>
<protein>
    <recommendedName>
        <fullName>Secreted effector protein SifB</fullName>
    </recommendedName>
</protein>
<evidence type="ECO:0000250" key="1"/>
<evidence type="ECO:0000269" key="2">
    <source>
    </source>
</evidence>
<evidence type="ECO:0000269" key="3">
    <source>
    </source>
</evidence>
<evidence type="ECO:0000269" key="4">
    <source>
    </source>
</evidence>
<evidence type="ECO:0000269" key="5">
    <source>
    </source>
</evidence>
<evidence type="ECO:0000303" key="6">
    <source>
    </source>
</evidence>
<evidence type="ECO:0000303" key="7">
    <source>
    </source>
</evidence>
<evidence type="ECO:0000303" key="8">
    <source>
    </source>
</evidence>
<evidence type="ECO:0000305" key="9"/>
<dbReference type="EMBL" id="AF236076">
    <property type="protein sequence ID" value="AAF82084.1"/>
    <property type="molecule type" value="Genomic_DNA"/>
</dbReference>
<dbReference type="EMBL" id="AE006468">
    <property type="protein sequence ID" value="AAL20520.1"/>
    <property type="molecule type" value="Genomic_DNA"/>
</dbReference>
<dbReference type="RefSeq" id="NP_460561.1">
    <property type="nucleotide sequence ID" value="NC_003197.2"/>
</dbReference>
<dbReference type="RefSeq" id="WP_001122926.1">
    <property type="nucleotide sequence ID" value="NC_003197.2"/>
</dbReference>
<dbReference type="SMR" id="Q9KIB9"/>
<dbReference type="STRING" id="99287.STM1602"/>
<dbReference type="PaxDb" id="99287-STM1602"/>
<dbReference type="GeneID" id="1253120"/>
<dbReference type="KEGG" id="stm:STM1602"/>
<dbReference type="PATRIC" id="fig|99287.12.peg.1693"/>
<dbReference type="HOGENOM" id="CLU_826077_0_0_6"/>
<dbReference type="OMA" id="KNEAHYQ"/>
<dbReference type="PhylomeDB" id="Q9KIB9"/>
<dbReference type="BioCyc" id="SENT99287:STM1602-MONOMER"/>
<dbReference type="Proteomes" id="UP000001014">
    <property type="component" value="Chromosome"/>
</dbReference>
<dbReference type="GO" id="GO:0005576">
    <property type="term" value="C:extracellular region"/>
    <property type="evidence" value="ECO:0007669"/>
    <property type="project" value="UniProtKB-SubCell"/>
</dbReference>
<dbReference type="GO" id="GO:0030430">
    <property type="term" value="C:host cell cytoplasm"/>
    <property type="evidence" value="ECO:0007669"/>
    <property type="project" value="UniProtKB-SubCell"/>
</dbReference>
<dbReference type="Gene3D" id="1.10.4120.20">
    <property type="match status" value="1"/>
</dbReference>
<dbReference type="Gene3D" id="3.30.2440.10">
    <property type="entry name" value="Secreted effector protein SifA"/>
    <property type="match status" value="1"/>
</dbReference>
<dbReference type="InterPro" id="IPR010637">
    <property type="entry name" value="Sif"/>
</dbReference>
<dbReference type="NCBIfam" id="NF007046">
    <property type="entry name" value="PRK09499.1"/>
    <property type="match status" value="1"/>
</dbReference>
<dbReference type="Pfam" id="PF06767">
    <property type="entry name" value="Sif"/>
    <property type="match status" value="1"/>
</dbReference>
<gene>
    <name type="primary">sifB</name>
    <name type="ordered locus">STM1602</name>
</gene>
<comment type="function">
    <text evidence="1">Effector proteins function to alter host cell physiology and promote bacterial survival in host tissues.</text>
</comment>
<comment type="subcellular location">
    <subcellularLocation>
        <location evidence="2">Secreted</location>
    </subcellularLocation>
    <subcellularLocation>
        <location evidence="2">Host cytoplasm</location>
    </subcellularLocation>
    <text>Secreted via type III secretion system 2 (SPI-2 T3SS), and delivered into the host cytoplasm. Localizes to the Salmonella-containing vacuole (SCV) at early time points following invasion and subsequently traffics away from the SCV along Salmonella-induced filaments (Sifs) in epithelial cells.</text>
</comment>
<comment type="induction">
    <text evidence="3 4 5">Induced when grown intracellularly and in an acidic environment; repressed by H-NS and induced by SsrB.</text>
</comment>
<comment type="similarity">
    <text evidence="9">Belongs to the Sif family.</text>
</comment>
<keyword id="KW-1035">Host cytoplasm</keyword>
<keyword id="KW-1185">Reference proteome</keyword>
<keyword id="KW-0964">Secreted</keyword>
<keyword id="KW-0843">Virulence</keyword>
<reference key="1">
    <citation type="journal article" date="2000" name="Proc. Natl. Acad. Sci. U.S.A.">
        <title>A conserved amino acid sequence directing intracellular type III secretion by Salmonella typhimurium.</title>
        <authorList>
            <person name="Miao E.A."/>
            <person name="Miller S.I."/>
        </authorList>
    </citation>
    <scope>NUCLEOTIDE SEQUENCE [GENOMIC DNA]</scope>
    <scope>SECRETION VIA TYPE III SECRETION SYSTEM</scope>
    <source>
        <strain>ATCC 14028s / SGSG 2262</strain>
    </source>
</reference>
<reference key="2">
    <citation type="journal article" date="2001" name="Nature">
        <title>Complete genome sequence of Salmonella enterica serovar Typhimurium LT2.</title>
        <authorList>
            <person name="McClelland M."/>
            <person name="Sanderson K.E."/>
            <person name="Spieth J."/>
            <person name="Clifton S.W."/>
            <person name="Latreille P."/>
            <person name="Courtney L."/>
            <person name="Porwollik S."/>
            <person name="Ali J."/>
            <person name="Dante M."/>
            <person name="Du F."/>
            <person name="Hou S."/>
            <person name="Layman D."/>
            <person name="Leonard S."/>
            <person name="Nguyen C."/>
            <person name="Scott K."/>
            <person name="Holmes A."/>
            <person name="Grewal N."/>
            <person name="Mulvaney E."/>
            <person name="Ryan E."/>
            <person name="Sun H."/>
            <person name="Florea L."/>
            <person name="Miller W."/>
            <person name="Stoneking T."/>
            <person name="Nhan M."/>
            <person name="Waterston R."/>
            <person name="Wilson R.K."/>
        </authorList>
    </citation>
    <scope>NUCLEOTIDE SEQUENCE [LARGE SCALE GENOMIC DNA]</scope>
    <source>
        <strain>LT2 / SGSC1412 / ATCC 700720</strain>
    </source>
</reference>
<reference key="3">
    <citation type="journal article" date="2003" name="Infect. Immun.">
        <title>The Salmonella enterica serovar typhimurium translocated effectors SseJ and SifB are targeted to the Salmonella-containing vacuole.</title>
        <authorList>
            <person name="Freeman J.A."/>
            <person name="Ohl M.E."/>
            <person name="Miller S.I."/>
        </authorList>
    </citation>
    <scope>SUBCELLULAR LOCATION</scope>
    <scope>SECRETION VIA TYPE III SECRETION SYSTEM</scope>
    <source>
        <strain>ATCC 14028s / SGSG 2262</strain>
    </source>
</reference>
<reference key="4">
    <citation type="journal article" date="2003" name="Microbiology">
        <title>The roles of SsrA-SsrB and OmpR-EnvZ in the regulation of genes encoding the Salmonella typhimurium SPI-2 type III secretion system.</title>
        <authorList>
            <person name="Garmendia J."/>
            <person name="Beuzon C.R."/>
            <person name="Ruiz-Albert J."/>
            <person name="Holden D.W."/>
        </authorList>
    </citation>
    <scope>INDUCTION</scope>
    <source>
        <strain evidence="6">ATCC 14028 / SGSC 2980 / CDC 6516-60 / NCTC 12023</strain>
    </source>
</reference>
<reference key="5">
    <citation type="journal article" date="2010" name="Infect. Immun.">
        <title>Systematic analysis of the SsrAB virulon of Salmonella enterica.</title>
        <authorList>
            <person name="Xu X."/>
            <person name="Hensel M."/>
        </authorList>
    </citation>
    <scope>INDUCTION</scope>
    <source>
        <strain evidence="7">ATCC 14028 / SGSC 2980 / CDC 6516-60 / NCTC 12023</strain>
    </source>
</reference>
<reference key="6">
    <citation type="journal article" date="2011" name="J. Biol. Chem.">
        <title>Salmonella enterica response regulator SsrB relieves H-NS silencing by displacing H-NS bound in polymerization mode and directly activates transcription.</title>
        <authorList>
            <person name="Walthers D."/>
            <person name="Li Y."/>
            <person name="Liu Y."/>
            <person name="Anand G."/>
            <person name="Yan J."/>
            <person name="Kenney L.J."/>
        </authorList>
    </citation>
    <scope>INDUCTION</scope>
    <source>
        <strain evidence="8">14028s / SGSC 2262</strain>
    </source>
</reference>
<name>SIFB_SALTY</name>